<gene>
    <name evidence="1" type="primary">purL</name>
    <name type="ordered locus">Ccon26_07770</name>
    <name type="ORF">CCC13826_1628</name>
</gene>
<proteinExistence type="inferred from homology"/>
<accession>A8Z6J5</accession>
<protein>
    <recommendedName>
        <fullName evidence="1">Phosphoribosylformylglycinamidine synthase subunit PurL</fullName>
        <shortName evidence="1">FGAM synthase</shortName>
        <ecNumber evidence="1">6.3.5.3</ecNumber>
    </recommendedName>
    <alternativeName>
        <fullName evidence="1">Formylglycinamide ribonucleotide amidotransferase subunit II</fullName>
        <shortName evidence="1">FGAR amidotransferase II</shortName>
        <shortName evidence="1">FGAR-AT II</shortName>
    </alternativeName>
    <alternativeName>
        <fullName evidence="1">Glutamine amidotransferase PurL</fullName>
    </alternativeName>
    <alternativeName>
        <fullName evidence="1">Phosphoribosylformylglycinamidine synthase subunit II</fullName>
    </alternativeName>
</protein>
<feature type="chain" id="PRO_1000072296" description="Phosphoribosylformylglycinamidine synthase subunit PurL">
    <location>
        <begin position="1"/>
        <end position="729"/>
    </location>
</feature>
<feature type="active site" evidence="1">
    <location>
        <position position="42"/>
    </location>
</feature>
<feature type="active site" description="Proton acceptor" evidence="1">
    <location>
        <position position="88"/>
    </location>
</feature>
<feature type="binding site" evidence="1">
    <location>
        <position position="45"/>
    </location>
    <ligand>
        <name>ATP</name>
        <dbReference type="ChEBI" id="CHEBI:30616"/>
    </ligand>
</feature>
<feature type="binding site" evidence="1">
    <location>
        <position position="84"/>
    </location>
    <ligand>
        <name>ATP</name>
        <dbReference type="ChEBI" id="CHEBI:30616"/>
    </ligand>
</feature>
<feature type="binding site" evidence="1">
    <location>
        <position position="86"/>
    </location>
    <ligand>
        <name>Mg(2+)</name>
        <dbReference type="ChEBI" id="CHEBI:18420"/>
        <label>1</label>
    </ligand>
</feature>
<feature type="binding site" evidence="1">
    <location>
        <begin position="87"/>
        <end position="90"/>
    </location>
    <ligand>
        <name>substrate</name>
    </ligand>
</feature>
<feature type="binding site" evidence="1">
    <location>
        <position position="109"/>
    </location>
    <ligand>
        <name>substrate</name>
    </ligand>
</feature>
<feature type="binding site" evidence="1">
    <location>
        <position position="110"/>
    </location>
    <ligand>
        <name>Mg(2+)</name>
        <dbReference type="ChEBI" id="CHEBI:18420"/>
        <label>2</label>
    </ligand>
</feature>
<feature type="binding site" evidence="1">
    <location>
        <position position="238"/>
    </location>
    <ligand>
        <name>substrate</name>
    </ligand>
</feature>
<feature type="binding site" evidence="1">
    <location>
        <position position="266"/>
    </location>
    <ligand>
        <name>Mg(2+)</name>
        <dbReference type="ChEBI" id="CHEBI:18420"/>
        <label>2</label>
    </ligand>
</feature>
<feature type="binding site" evidence="1">
    <location>
        <begin position="310"/>
        <end position="312"/>
    </location>
    <ligand>
        <name>substrate</name>
    </ligand>
</feature>
<feature type="binding site" evidence="1">
    <location>
        <position position="492"/>
    </location>
    <ligand>
        <name>ATP</name>
        <dbReference type="ChEBI" id="CHEBI:30616"/>
    </ligand>
</feature>
<feature type="binding site" evidence="1">
    <location>
        <position position="529"/>
    </location>
    <ligand>
        <name>ATP</name>
        <dbReference type="ChEBI" id="CHEBI:30616"/>
    </ligand>
</feature>
<feature type="binding site" evidence="1">
    <location>
        <position position="530"/>
    </location>
    <ligand>
        <name>Mg(2+)</name>
        <dbReference type="ChEBI" id="CHEBI:18420"/>
        <label>1</label>
    </ligand>
</feature>
<feature type="binding site" evidence="1">
    <location>
        <position position="532"/>
    </location>
    <ligand>
        <name>substrate</name>
    </ligand>
</feature>
<dbReference type="EC" id="6.3.5.3" evidence="1"/>
<dbReference type="EMBL" id="CP000792">
    <property type="protein sequence ID" value="ABW74775.1"/>
    <property type="molecule type" value="Genomic_DNA"/>
</dbReference>
<dbReference type="RefSeq" id="WP_048809794.1">
    <property type="nucleotide sequence ID" value="NC_009802.2"/>
</dbReference>
<dbReference type="SMR" id="A8Z6J5"/>
<dbReference type="STRING" id="360104.CCC13826_1628"/>
<dbReference type="KEGG" id="cco:CCC13826_1628"/>
<dbReference type="eggNOG" id="COG0046">
    <property type="taxonomic scope" value="Bacteria"/>
</dbReference>
<dbReference type="HOGENOM" id="CLU_003100_0_1_7"/>
<dbReference type="OrthoDB" id="9804441at2"/>
<dbReference type="UniPathway" id="UPA00074">
    <property type="reaction ID" value="UER00128"/>
</dbReference>
<dbReference type="Proteomes" id="UP000001121">
    <property type="component" value="Chromosome"/>
</dbReference>
<dbReference type="GO" id="GO:0005737">
    <property type="term" value="C:cytoplasm"/>
    <property type="evidence" value="ECO:0007669"/>
    <property type="project" value="UniProtKB-SubCell"/>
</dbReference>
<dbReference type="GO" id="GO:0005524">
    <property type="term" value="F:ATP binding"/>
    <property type="evidence" value="ECO:0007669"/>
    <property type="project" value="UniProtKB-UniRule"/>
</dbReference>
<dbReference type="GO" id="GO:0000287">
    <property type="term" value="F:magnesium ion binding"/>
    <property type="evidence" value="ECO:0007669"/>
    <property type="project" value="UniProtKB-UniRule"/>
</dbReference>
<dbReference type="GO" id="GO:0004642">
    <property type="term" value="F:phosphoribosylformylglycinamidine synthase activity"/>
    <property type="evidence" value="ECO:0007669"/>
    <property type="project" value="UniProtKB-UniRule"/>
</dbReference>
<dbReference type="GO" id="GO:0006189">
    <property type="term" value="P:'de novo' IMP biosynthetic process"/>
    <property type="evidence" value="ECO:0007669"/>
    <property type="project" value="UniProtKB-UniRule"/>
</dbReference>
<dbReference type="CDD" id="cd02203">
    <property type="entry name" value="PurL_repeat1"/>
    <property type="match status" value="1"/>
</dbReference>
<dbReference type="CDD" id="cd02204">
    <property type="entry name" value="PurL_repeat2"/>
    <property type="match status" value="1"/>
</dbReference>
<dbReference type="FunFam" id="3.30.1330.10:FF:000004">
    <property type="entry name" value="Phosphoribosylformylglycinamidine synthase subunit PurL"/>
    <property type="match status" value="1"/>
</dbReference>
<dbReference type="Gene3D" id="3.90.650.10">
    <property type="entry name" value="PurM-like C-terminal domain"/>
    <property type="match status" value="2"/>
</dbReference>
<dbReference type="Gene3D" id="3.30.1330.10">
    <property type="entry name" value="PurM-like, N-terminal domain"/>
    <property type="match status" value="2"/>
</dbReference>
<dbReference type="HAMAP" id="MF_00420">
    <property type="entry name" value="PurL_2"/>
    <property type="match status" value="1"/>
</dbReference>
<dbReference type="InterPro" id="IPR010074">
    <property type="entry name" value="PRibForGlyAmidine_synth_PurL"/>
</dbReference>
<dbReference type="InterPro" id="IPR041609">
    <property type="entry name" value="PurL_linker"/>
</dbReference>
<dbReference type="InterPro" id="IPR010918">
    <property type="entry name" value="PurM-like_C_dom"/>
</dbReference>
<dbReference type="InterPro" id="IPR036676">
    <property type="entry name" value="PurM-like_C_sf"/>
</dbReference>
<dbReference type="InterPro" id="IPR016188">
    <property type="entry name" value="PurM-like_N"/>
</dbReference>
<dbReference type="InterPro" id="IPR036921">
    <property type="entry name" value="PurM-like_N_sf"/>
</dbReference>
<dbReference type="NCBIfam" id="TIGR01736">
    <property type="entry name" value="FGAM_synth_II"/>
    <property type="match status" value="1"/>
</dbReference>
<dbReference type="NCBIfam" id="NF002290">
    <property type="entry name" value="PRK01213.1"/>
    <property type="match status" value="1"/>
</dbReference>
<dbReference type="PANTHER" id="PTHR43555">
    <property type="entry name" value="PHOSPHORIBOSYLFORMYLGLYCINAMIDINE SYNTHASE SUBUNIT PURL"/>
    <property type="match status" value="1"/>
</dbReference>
<dbReference type="PANTHER" id="PTHR43555:SF1">
    <property type="entry name" value="PHOSPHORIBOSYLFORMYLGLYCINAMIDINE SYNTHASE SUBUNIT PURL"/>
    <property type="match status" value="1"/>
</dbReference>
<dbReference type="Pfam" id="PF00586">
    <property type="entry name" value="AIRS"/>
    <property type="match status" value="2"/>
</dbReference>
<dbReference type="Pfam" id="PF02769">
    <property type="entry name" value="AIRS_C"/>
    <property type="match status" value="2"/>
</dbReference>
<dbReference type="Pfam" id="PF18072">
    <property type="entry name" value="FGAR-AT_linker"/>
    <property type="match status" value="1"/>
</dbReference>
<dbReference type="PIRSF" id="PIRSF001587">
    <property type="entry name" value="FGAM_synthase_II"/>
    <property type="match status" value="1"/>
</dbReference>
<dbReference type="SUPFAM" id="SSF56042">
    <property type="entry name" value="PurM C-terminal domain-like"/>
    <property type="match status" value="2"/>
</dbReference>
<dbReference type="SUPFAM" id="SSF55326">
    <property type="entry name" value="PurM N-terminal domain-like"/>
    <property type="match status" value="2"/>
</dbReference>
<evidence type="ECO:0000255" key="1">
    <source>
        <dbReference type="HAMAP-Rule" id="MF_00420"/>
    </source>
</evidence>
<keyword id="KW-0067">ATP-binding</keyword>
<keyword id="KW-0963">Cytoplasm</keyword>
<keyword id="KW-0436">Ligase</keyword>
<keyword id="KW-0460">Magnesium</keyword>
<keyword id="KW-0479">Metal-binding</keyword>
<keyword id="KW-0547">Nucleotide-binding</keyword>
<keyword id="KW-0658">Purine biosynthesis</keyword>
<organism>
    <name type="scientific">Campylobacter concisus (strain 13826)</name>
    <dbReference type="NCBI Taxonomy" id="360104"/>
    <lineage>
        <taxon>Bacteria</taxon>
        <taxon>Pseudomonadati</taxon>
        <taxon>Campylobacterota</taxon>
        <taxon>Epsilonproteobacteria</taxon>
        <taxon>Campylobacterales</taxon>
        <taxon>Campylobacteraceae</taxon>
        <taxon>Campylobacter</taxon>
    </lineage>
</organism>
<name>PURL_CAMC1</name>
<sequence length="729" mass="79372">MDKATIQAHKISDEEYEEILKILGREPNLLELGIFSAMWSEHCSYKSSKKYLNGFPTKAPWVIQGPGENAGVIDVGDGVAAVFKMESHNHPSFIEPFQGAATGVGGILRDVFTMGARVVANMNSLRFGEIRGESELAKKHRYLLKGSVAGIGHYGNCMGIPTIGGETTFDPSFNGNILINAFALGLCKSDEIFYGKAEGVGNPVIYVGSKTGRDGLGGAVMASDSFNDENKSLRPTVQVGDPFAEKLLMEACLELFKKDYIIGIQDMGAAGLTSSSFEMAGRSGSGMKMYLDRVPMREVGMTPYELMLSESQERMLICAKKGFEQKVLEIFRKWDLDAEIIGEVTSSGVMQLYWHDELAGEIPIGPLSEAAPVLDRPVARPKYLDEIANLEIPNNIDNKTAFFKLLKEPEVLNKSFIYDQYDANIQTNTIKQPGCLGAATIRIKESGRAIAMAAQCDPRANFVDPKIGAARAVAAAGRKVAMSGAVPLAITDCLNYGNPQNPEVMWQFKEGCEGIKEACRELNTPVVSGNVSLYNDTDGISVYPTPAIVTVGVNEDANLNLKSTFSSEGRAIYLLGETSGEFAASLYAKALFNVVGGKLKEVDYKAERALWELVIEANKEQILEFANSVGVGGLAITLAKMASISNIGVNCEVKFKEPNFIFDESFSRAVVGVKDEAKFEALATKFGVKFEKIGVSGGKRFKLNEIDESLEDVREIYLNEFAKIVKKED</sequence>
<reference key="1">
    <citation type="submission" date="2007-10" db="EMBL/GenBank/DDBJ databases">
        <title>Genome sequence of Campylobacter concisus 13826 isolated from human feces.</title>
        <authorList>
            <person name="Fouts D.E."/>
            <person name="Mongodin E.F."/>
            <person name="Puiu D."/>
            <person name="Sebastian Y."/>
            <person name="Miller W.G."/>
            <person name="Mandrell R.E."/>
            <person name="On S."/>
            <person name="Nelson K.E."/>
        </authorList>
    </citation>
    <scope>NUCLEOTIDE SEQUENCE [LARGE SCALE GENOMIC DNA]</scope>
    <source>
        <strain>13826</strain>
    </source>
</reference>
<comment type="function">
    <text evidence="1">Part of the phosphoribosylformylglycinamidine synthase complex involved in the purines biosynthetic pathway. Catalyzes the ATP-dependent conversion of formylglycinamide ribonucleotide (FGAR) and glutamine to yield formylglycinamidine ribonucleotide (FGAM) and glutamate. The FGAM synthase complex is composed of three subunits. PurQ produces an ammonia molecule by converting glutamine to glutamate. PurL transfers the ammonia molecule to FGAR to form FGAM in an ATP-dependent manner. PurS interacts with PurQ and PurL and is thought to assist in the transfer of the ammonia molecule from PurQ to PurL.</text>
</comment>
<comment type="catalytic activity">
    <reaction evidence="1">
        <text>N(2)-formyl-N(1)-(5-phospho-beta-D-ribosyl)glycinamide + L-glutamine + ATP + H2O = 2-formamido-N(1)-(5-O-phospho-beta-D-ribosyl)acetamidine + L-glutamate + ADP + phosphate + H(+)</text>
        <dbReference type="Rhea" id="RHEA:17129"/>
        <dbReference type="ChEBI" id="CHEBI:15377"/>
        <dbReference type="ChEBI" id="CHEBI:15378"/>
        <dbReference type="ChEBI" id="CHEBI:29985"/>
        <dbReference type="ChEBI" id="CHEBI:30616"/>
        <dbReference type="ChEBI" id="CHEBI:43474"/>
        <dbReference type="ChEBI" id="CHEBI:58359"/>
        <dbReference type="ChEBI" id="CHEBI:147286"/>
        <dbReference type="ChEBI" id="CHEBI:147287"/>
        <dbReference type="ChEBI" id="CHEBI:456216"/>
        <dbReference type="EC" id="6.3.5.3"/>
    </reaction>
</comment>
<comment type="pathway">
    <text evidence="1">Purine metabolism; IMP biosynthesis via de novo pathway; 5-amino-1-(5-phospho-D-ribosyl)imidazole from N(2)-formyl-N(1)-(5-phospho-D-ribosyl)glycinamide: step 1/2.</text>
</comment>
<comment type="subunit">
    <text evidence="1">Monomer. Part of the FGAM synthase complex composed of 1 PurL, 1 PurQ and 2 PurS subunits.</text>
</comment>
<comment type="subcellular location">
    <subcellularLocation>
        <location evidence="1">Cytoplasm</location>
    </subcellularLocation>
</comment>
<comment type="similarity">
    <text evidence="1">Belongs to the FGAMS family.</text>
</comment>